<keyword id="KW-0963">Cytoplasm</keyword>
<keyword id="KW-0448">Lipopolysaccharide biosynthesis</keyword>
<keyword id="KW-0548">Nucleotidyltransferase</keyword>
<keyword id="KW-1185">Reference proteome</keyword>
<keyword id="KW-0808">Transferase</keyword>
<evidence type="ECO:0000255" key="1">
    <source>
        <dbReference type="HAMAP-Rule" id="MF_00057"/>
    </source>
</evidence>
<protein>
    <recommendedName>
        <fullName evidence="1">3-deoxy-manno-octulosonate cytidylyltransferase</fullName>
        <ecNumber evidence="1">2.7.7.38</ecNumber>
    </recommendedName>
    <alternativeName>
        <fullName evidence="1">CMP-2-keto-3-deoxyoctulosonic acid synthase</fullName>
        <shortName evidence="1">CKS</shortName>
        <shortName evidence="1">CMP-KDO synthase</shortName>
    </alternativeName>
</protein>
<gene>
    <name evidence="1" type="primary">kdsB</name>
    <name type="ordered locus">Rleg2_4084</name>
</gene>
<dbReference type="EC" id="2.7.7.38" evidence="1"/>
<dbReference type="EMBL" id="CP001191">
    <property type="protein sequence ID" value="ACI57346.1"/>
    <property type="molecule type" value="Genomic_DNA"/>
</dbReference>
<dbReference type="RefSeq" id="WP_012559498.1">
    <property type="nucleotide sequence ID" value="NC_011369.1"/>
</dbReference>
<dbReference type="SMR" id="B5ZWP0"/>
<dbReference type="STRING" id="395492.Rleg2_4084"/>
<dbReference type="KEGG" id="rlt:Rleg2_4084"/>
<dbReference type="eggNOG" id="COG1212">
    <property type="taxonomic scope" value="Bacteria"/>
</dbReference>
<dbReference type="HOGENOM" id="CLU_065038_0_1_5"/>
<dbReference type="UniPathway" id="UPA00030"/>
<dbReference type="UniPathway" id="UPA00358">
    <property type="reaction ID" value="UER00476"/>
</dbReference>
<dbReference type="Proteomes" id="UP000008330">
    <property type="component" value="Chromosome"/>
</dbReference>
<dbReference type="GO" id="GO:0005829">
    <property type="term" value="C:cytosol"/>
    <property type="evidence" value="ECO:0007669"/>
    <property type="project" value="TreeGrafter"/>
</dbReference>
<dbReference type="GO" id="GO:0008690">
    <property type="term" value="F:3-deoxy-manno-octulosonate cytidylyltransferase activity"/>
    <property type="evidence" value="ECO:0007669"/>
    <property type="project" value="UniProtKB-UniRule"/>
</dbReference>
<dbReference type="GO" id="GO:0033468">
    <property type="term" value="P:CMP-keto-3-deoxy-D-manno-octulosonic acid biosynthetic process"/>
    <property type="evidence" value="ECO:0007669"/>
    <property type="project" value="UniProtKB-UniRule"/>
</dbReference>
<dbReference type="GO" id="GO:0009103">
    <property type="term" value="P:lipopolysaccharide biosynthetic process"/>
    <property type="evidence" value="ECO:0007669"/>
    <property type="project" value="UniProtKB-UniRule"/>
</dbReference>
<dbReference type="CDD" id="cd02517">
    <property type="entry name" value="CMP-KDO-Synthetase"/>
    <property type="match status" value="1"/>
</dbReference>
<dbReference type="Gene3D" id="3.90.550.10">
    <property type="entry name" value="Spore Coat Polysaccharide Biosynthesis Protein SpsA, Chain A"/>
    <property type="match status" value="1"/>
</dbReference>
<dbReference type="HAMAP" id="MF_00057">
    <property type="entry name" value="KdsB"/>
    <property type="match status" value="1"/>
</dbReference>
<dbReference type="InterPro" id="IPR003329">
    <property type="entry name" value="Cytidylyl_trans"/>
</dbReference>
<dbReference type="InterPro" id="IPR004528">
    <property type="entry name" value="KdsB"/>
</dbReference>
<dbReference type="InterPro" id="IPR029044">
    <property type="entry name" value="Nucleotide-diphossugar_trans"/>
</dbReference>
<dbReference type="NCBIfam" id="TIGR00466">
    <property type="entry name" value="kdsB"/>
    <property type="match status" value="1"/>
</dbReference>
<dbReference type="NCBIfam" id="NF003948">
    <property type="entry name" value="PRK05450.1-1"/>
    <property type="match status" value="1"/>
</dbReference>
<dbReference type="NCBIfam" id="NF003952">
    <property type="entry name" value="PRK05450.1-5"/>
    <property type="match status" value="1"/>
</dbReference>
<dbReference type="PANTHER" id="PTHR42866">
    <property type="entry name" value="3-DEOXY-MANNO-OCTULOSONATE CYTIDYLYLTRANSFERASE"/>
    <property type="match status" value="1"/>
</dbReference>
<dbReference type="PANTHER" id="PTHR42866:SF2">
    <property type="entry name" value="3-DEOXY-MANNO-OCTULOSONATE CYTIDYLYLTRANSFERASE, MITOCHONDRIAL"/>
    <property type="match status" value="1"/>
</dbReference>
<dbReference type="Pfam" id="PF02348">
    <property type="entry name" value="CTP_transf_3"/>
    <property type="match status" value="1"/>
</dbReference>
<dbReference type="SUPFAM" id="SSF53448">
    <property type="entry name" value="Nucleotide-diphospho-sugar transferases"/>
    <property type="match status" value="1"/>
</dbReference>
<accession>B5ZWP0</accession>
<reference key="1">
    <citation type="journal article" date="2010" name="Stand. Genomic Sci.">
        <title>Complete genome sequence of Rhizobium leguminosarum bv trifolii strain WSM2304, an effective microsymbiont of the South American clover Trifolium polymorphum.</title>
        <authorList>
            <person name="Reeve W."/>
            <person name="O'Hara G."/>
            <person name="Chain P."/>
            <person name="Ardley J."/>
            <person name="Brau L."/>
            <person name="Nandesena K."/>
            <person name="Tiwari R."/>
            <person name="Malfatti S."/>
            <person name="Kiss H."/>
            <person name="Lapidus A."/>
            <person name="Copeland A."/>
            <person name="Nolan M."/>
            <person name="Land M."/>
            <person name="Ivanova N."/>
            <person name="Mavromatis K."/>
            <person name="Markowitz V."/>
            <person name="Kyrpides N."/>
            <person name="Melino V."/>
            <person name="Denton M."/>
            <person name="Yates R."/>
            <person name="Howieson J."/>
        </authorList>
    </citation>
    <scope>NUCLEOTIDE SEQUENCE [LARGE SCALE GENOMIC DNA]</scope>
    <source>
        <strain>WSM2304</strain>
    </source>
</reference>
<sequence length="251" mass="27096">MSDSNLDGVLVLIPARMASTRLPGKPLADICGLPMIVQVAMRAQEAAIGRVVVAVDDIRVFDAVSAAGFEVVMTSSDHQSGSDRIFEALQKVDPAGKAEFIVNVQGDLPTIDPETVRAALRPLENEAVDIGTLTTEIDNEEDKTAPHIVKVVGSPVSDTRLRGLYFTRATAPYGKGPLYHHIGLYAYRRAALERFVSLGPSTLERREALEQLRALEAGMRIDAEIVDTVPLGVDTPADLEKARRILSARTG</sequence>
<organism>
    <name type="scientific">Rhizobium leguminosarum bv. trifolii (strain WSM2304)</name>
    <dbReference type="NCBI Taxonomy" id="395492"/>
    <lineage>
        <taxon>Bacteria</taxon>
        <taxon>Pseudomonadati</taxon>
        <taxon>Pseudomonadota</taxon>
        <taxon>Alphaproteobacteria</taxon>
        <taxon>Hyphomicrobiales</taxon>
        <taxon>Rhizobiaceae</taxon>
        <taxon>Rhizobium/Agrobacterium group</taxon>
        <taxon>Rhizobium</taxon>
    </lineage>
</organism>
<comment type="function">
    <text evidence="1">Activates KDO (a required 8-carbon sugar) for incorporation into bacterial lipopolysaccharide in Gram-negative bacteria.</text>
</comment>
<comment type="catalytic activity">
    <reaction evidence="1">
        <text>3-deoxy-alpha-D-manno-oct-2-ulosonate + CTP = CMP-3-deoxy-beta-D-manno-octulosonate + diphosphate</text>
        <dbReference type="Rhea" id="RHEA:23448"/>
        <dbReference type="ChEBI" id="CHEBI:33019"/>
        <dbReference type="ChEBI" id="CHEBI:37563"/>
        <dbReference type="ChEBI" id="CHEBI:85986"/>
        <dbReference type="ChEBI" id="CHEBI:85987"/>
        <dbReference type="EC" id="2.7.7.38"/>
    </reaction>
</comment>
<comment type="pathway">
    <text evidence="1">Nucleotide-sugar biosynthesis; CMP-3-deoxy-D-manno-octulosonate biosynthesis; CMP-3-deoxy-D-manno-octulosonate from 3-deoxy-D-manno-octulosonate and CTP: step 1/1.</text>
</comment>
<comment type="pathway">
    <text evidence="1">Bacterial outer membrane biogenesis; lipopolysaccharide biosynthesis.</text>
</comment>
<comment type="subcellular location">
    <subcellularLocation>
        <location evidence="1">Cytoplasm</location>
    </subcellularLocation>
</comment>
<comment type="similarity">
    <text evidence="1">Belongs to the KdsB family.</text>
</comment>
<name>KDSB_RHILW</name>
<feature type="chain" id="PRO_0000370131" description="3-deoxy-manno-octulosonate cytidylyltransferase">
    <location>
        <begin position="1"/>
        <end position="251"/>
    </location>
</feature>
<proteinExistence type="inferred from homology"/>